<proteinExistence type="inferred from homology"/>
<gene>
    <name evidence="1" type="primary">tal1</name>
    <name type="ordered locus">LMOf2365_2730</name>
</gene>
<reference key="1">
    <citation type="journal article" date="2004" name="Nucleic Acids Res.">
        <title>Whole genome comparisons of serotype 4b and 1/2a strains of the food-borne pathogen Listeria monocytogenes reveal new insights into the core genome components of this species.</title>
        <authorList>
            <person name="Nelson K.E."/>
            <person name="Fouts D.E."/>
            <person name="Mongodin E.F."/>
            <person name="Ravel J."/>
            <person name="DeBoy R.T."/>
            <person name="Kolonay J.F."/>
            <person name="Rasko D.A."/>
            <person name="Angiuoli S.V."/>
            <person name="Gill S.R."/>
            <person name="Paulsen I.T."/>
            <person name="Peterson J.D."/>
            <person name="White O."/>
            <person name="Nelson W.C."/>
            <person name="Nierman W.C."/>
            <person name="Beanan M.J."/>
            <person name="Brinkac L.M."/>
            <person name="Daugherty S.C."/>
            <person name="Dodson R.J."/>
            <person name="Durkin A.S."/>
            <person name="Madupu R."/>
            <person name="Haft D.H."/>
            <person name="Selengut J."/>
            <person name="Van Aken S.E."/>
            <person name="Khouri H.M."/>
            <person name="Fedorova N."/>
            <person name="Forberger H.A."/>
            <person name="Tran B."/>
            <person name="Kathariou S."/>
            <person name="Wonderling L.D."/>
            <person name="Uhlich G.A."/>
            <person name="Bayles D.O."/>
            <person name="Luchansky J.B."/>
            <person name="Fraser C.M."/>
        </authorList>
    </citation>
    <scope>NUCLEOTIDE SEQUENCE [LARGE SCALE GENOMIC DNA]</scope>
    <source>
        <strain>F2365</strain>
    </source>
</reference>
<evidence type="ECO:0000255" key="1">
    <source>
        <dbReference type="HAMAP-Rule" id="MF_00494"/>
    </source>
</evidence>
<protein>
    <recommendedName>
        <fullName evidence="1">Probable transaldolase 1</fullName>
        <ecNumber evidence="1">2.2.1.2</ecNumber>
    </recommendedName>
</protein>
<name>TAL1_LISMF</name>
<organism>
    <name type="scientific">Listeria monocytogenes serotype 4b (strain F2365)</name>
    <dbReference type="NCBI Taxonomy" id="265669"/>
    <lineage>
        <taxon>Bacteria</taxon>
        <taxon>Bacillati</taxon>
        <taxon>Bacillota</taxon>
        <taxon>Bacilli</taxon>
        <taxon>Bacillales</taxon>
        <taxon>Listeriaceae</taxon>
        <taxon>Listeria</taxon>
    </lineage>
</organism>
<comment type="function">
    <text evidence="1">Transaldolase is important for the balance of metabolites in the pentose-phosphate pathway.</text>
</comment>
<comment type="catalytic activity">
    <reaction evidence="1">
        <text>D-sedoheptulose 7-phosphate + D-glyceraldehyde 3-phosphate = D-erythrose 4-phosphate + beta-D-fructose 6-phosphate</text>
        <dbReference type="Rhea" id="RHEA:17053"/>
        <dbReference type="ChEBI" id="CHEBI:16897"/>
        <dbReference type="ChEBI" id="CHEBI:57483"/>
        <dbReference type="ChEBI" id="CHEBI:57634"/>
        <dbReference type="ChEBI" id="CHEBI:59776"/>
        <dbReference type="EC" id="2.2.1.2"/>
    </reaction>
</comment>
<comment type="pathway">
    <text evidence="1">Carbohydrate degradation; pentose phosphate pathway; D-glyceraldehyde 3-phosphate and beta-D-fructose 6-phosphate from D-ribose 5-phosphate and D-xylulose 5-phosphate (non-oxidative stage): step 2/3.</text>
</comment>
<comment type="subcellular location">
    <subcellularLocation>
        <location evidence="1">Cytoplasm</location>
    </subcellularLocation>
</comment>
<comment type="similarity">
    <text evidence="1">Belongs to the transaldolase family. Type 3B subfamily.</text>
</comment>
<sequence length="214" mass="23106">MRFFIDTANVEEIKKANRMGFIAGVTTNPSLVAKEGRDFNEVIQEITSIVDGPISGEVVSLEADEMIAEGRVIAKIHPNMVVKIPMTGEGLAAVKVLTEEGIKTNVTLVFSATQALLAARAGATYVSPFLGRLDDIGDDGLVLIRDIADIFEIYGIPTEIISASVRHPIHVIECAKAGADIATVPFKVFEQMLKHPLTDSGIDKFLADWEAAKK</sequence>
<feature type="chain" id="PRO_0000173673" description="Probable transaldolase 1">
    <location>
        <begin position="1"/>
        <end position="214"/>
    </location>
</feature>
<feature type="active site" description="Schiff-base intermediate with substrate" evidence="1">
    <location>
        <position position="83"/>
    </location>
</feature>
<keyword id="KW-0963">Cytoplasm</keyword>
<keyword id="KW-0570">Pentose shunt</keyword>
<keyword id="KW-0704">Schiff base</keyword>
<keyword id="KW-0808">Transferase</keyword>
<dbReference type="EC" id="2.2.1.2" evidence="1"/>
<dbReference type="EMBL" id="AE017262">
    <property type="protein sequence ID" value="AAT05495.1"/>
    <property type="molecule type" value="Genomic_DNA"/>
</dbReference>
<dbReference type="SMR" id="Q71W21"/>
<dbReference type="KEGG" id="lmf:LMOf2365_2730"/>
<dbReference type="HOGENOM" id="CLU_079764_0_0_9"/>
<dbReference type="UniPathway" id="UPA00115">
    <property type="reaction ID" value="UER00414"/>
</dbReference>
<dbReference type="GO" id="GO:0005737">
    <property type="term" value="C:cytoplasm"/>
    <property type="evidence" value="ECO:0007669"/>
    <property type="project" value="UniProtKB-SubCell"/>
</dbReference>
<dbReference type="GO" id="GO:0016832">
    <property type="term" value="F:aldehyde-lyase activity"/>
    <property type="evidence" value="ECO:0007669"/>
    <property type="project" value="InterPro"/>
</dbReference>
<dbReference type="GO" id="GO:0004801">
    <property type="term" value="F:transaldolase activity"/>
    <property type="evidence" value="ECO:0007669"/>
    <property type="project" value="UniProtKB-UniRule"/>
</dbReference>
<dbReference type="GO" id="GO:0005975">
    <property type="term" value="P:carbohydrate metabolic process"/>
    <property type="evidence" value="ECO:0007669"/>
    <property type="project" value="InterPro"/>
</dbReference>
<dbReference type="GO" id="GO:0006098">
    <property type="term" value="P:pentose-phosphate shunt"/>
    <property type="evidence" value="ECO:0007669"/>
    <property type="project" value="UniProtKB-UniRule"/>
</dbReference>
<dbReference type="CDD" id="cd00956">
    <property type="entry name" value="Transaldolase_FSA"/>
    <property type="match status" value="1"/>
</dbReference>
<dbReference type="FunFam" id="3.20.20.70:FF:000018">
    <property type="entry name" value="Probable transaldolase"/>
    <property type="match status" value="1"/>
</dbReference>
<dbReference type="Gene3D" id="3.20.20.70">
    <property type="entry name" value="Aldolase class I"/>
    <property type="match status" value="1"/>
</dbReference>
<dbReference type="HAMAP" id="MF_00494">
    <property type="entry name" value="Transaldolase_3b"/>
    <property type="match status" value="1"/>
</dbReference>
<dbReference type="InterPro" id="IPR013785">
    <property type="entry name" value="Aldolase_TIM"/>
</dbReference>
<dbReference type="InterPro" id="IPR001585">
    <property type="entry name" value="TAL/FSA"/>
</dbReference>
<dbReference type="InterPro" id="IPR022999">
    <property type="entry name" value="Transaldolase_3B"/>
</dbReference>
<dbReference type="InterPro" id="IPR004731">
    <property type="entry name" value="Transaldolase_3B/F6P_aldolase"/>
</dbReference>
<dbReference type="InterPro" id="IPR018225">
    <property type="entry name" value="Transaldolase_AS"/>
</dbReference>
<dbReference type="InterPro" id="IPR033919">
    <property type="entry name" value="TSA/FSA_arc/bac"/>
</dbReference>
<dbReference type="NCBIfam" id="TIGR00875">
    <property type="entry name" value="fsa_talC_mipB"/>
    <property type="match status" value="1"/>
</dbReference>
<dbReference type="PANTHER" id="PTHR10683">
    <property type="entry name" value="TRANSALDOLASE"/>
    <property type="match status" value="1"/>
</dbReference>
<dbReference type="PANTHER" id="PTHR10683:SF36">
    <property type="entry name" value="TRANSALDOLASE"/>
    <property type="match status" value="1"/>
</dbReference>
<dbReference type="Pfam" id="PF00923">
    <property type="entry name" value="TAL_FSA"/>
    <property type="match status" value="1"/>
</dbReference>
<dbReference type="SUPFAM" id="SSF51569">
    <property type="entry name" value="Aldolase"/>
    <property type="match status" value="1"/>
</dbReference>
<dbReference type="PROSITE" id="PS01054">
    <property type="entry name" value="TRANSALDOLASE_1"/>
    <property type="match status" value="1"/>
</dbReference>
<dbReference type="PROSITE" id="PS00958">
    <property type="entry name" value="TRANSALDOLASE_2"/>
    <property type="match status" value="1"/>
</dbReference>
<accession>Q71W21</accession>